<comment type="function">
    <text evidence="1">Catalyzes the reversible interconversion of serine and glycine with tetrahydrofolate (THF) serving as the one-carbon carrier. This reaction serves as the major source of one-carbon groups required for the biosynthesis of purines, thymidylate, methionine, and other important biomolecules. Also exhibits THF-independent aldolase activity toward beta-hydroxyamino acids, producing glycine and aldehydes, via a retro-aldol mechanism.</text>
</comment>
<comment type="catalytic activity">
    <reaction evidence="1">
        <text>(6R)-5,10-methylene-5,6,7,8-tetrahydrofolate + glycine + H2O = (6S)-5,6,7,8-tetrahydrofolate + L-serine</text>
        <dbReference type="Rhea" id="RHEA:15481"/>
        <dbReference type="ChEBI" id="CHEBI:15377"/>
        <dbReference type="ChEBI" id="CHEBI:15636"/>
        <dbReference type="ChEBI" id="CHEBI:33384"/>
        <dbReference type="ChEBI" id="CHEBI:57305"/>
        <dbReference type="ChEBI" id="CHEBI:57453"/>
        <dbReference type="EC" id="2.1.2.1"/>
    </reaction>
</comment>
<comment type="cofactor">
    <cofactor evidence="1">
        <name>pyridoxal 5'-phosphate</name>
        <dbReference type="ChEBI" id="CHEBI:597326"/>
    </cofactor>
</comment>
<comment type="pathway">
    <text evidence="1">One-carbon metabolism; tetrahydrofolate interconversion.</text>
</comment>
<comment type="pathway">
    <text evidence="1">Amino-acid biosynthesis; glycine biosynthesis; glycine from L-serine: step 1/1.</text>
</comment>
<comment type="subunit">
    <text evidence="1">Homodimer.</text>
</comment>
<comment type="subcellular location">
    <subcellularLocation>
        <location evidence="1">Cytoplasm</location>
    </subcellularLocation>
</comment>
<comment type="similarity">
    <text evidence="1">Belongs to the SHMT family.</text>
</comment>
<feature type="chain" id="PRO_0000113590" description="Serine hydroxymethyltransferase">
    <location>
        <begin position="1"/>
        <end position="411"/>
    </location>
</feature>
<feature type="binding site" evidence="1">
    <location>
        <begin position="120"/>
        <end position="122"/>
    </location>
    <ligand>
        <name>(6S)-5,6,7,8-tetrahydrofolate</name>
        <dbReference type="ChEBI" id="CHEBI:57453"/>
    </ligand>
</feature>
<feature type="binding site" evidence="1">
    <location>
        <begin position="350"/>
        <end position="352"/>
    </location>
    <ligand>
        <name>(6S)-5,6,7,8-tetrahydrofolate</name>
        <dbReference type="ChEBI" id="CHEBI:57453"/>
    </ligand>
</feature>
<feature type="site" description="Plays an important role in substrate specificity" evidence="1">
    <location>
        <position position="224"/>
    </location>
</feature>
<feature type="modified residue" description="N6-(pyridoxal phosphate)lysine" evidence="1">
    <location>
        <position position="225"/>
    </location>
</feature>
<dbReference type="EC" id="2.1.2.1" evidence="1"/>
<dbReference type="EMBL" id="AE017198">
    <property type="protein sequence ID" value="AAS08246.1"/>
    <property type="molecule type" value="Genomic_DNA"/>
</dbReference>
<dbReference type="RefSeq" id="WP_011161451.1">
    <property type="nucleotide sequence ID" value="NC_005362.1"/>
</dbReference>
<dbReference type="SMR" id="Q74LC1"/>
<dbReference type="KEGG" id="ljo:LJ_0263"/>
<dbReference type="PATRIC" id="fig|257314.6.peg.275"/>
<dbReference type="eggNOG" id="COG0112">
    <property type="taxonomic scope" value="Bacteria"/>
</dbReference>
<dbReference type="HOGENOM" id="CLU_022477_2_1_9"/>
<dbReference type="UniPathway" id="UPA00193"/>
<dbReference type="UniPathway" id="UPA00288">
    <property type="reaction ID" value="UER01023"/>
</dbReference>
<dbReference type="Proteomes" id="UP000000581">
    <property type="component" value="Chromosome"/>
</dbReference>
<dbReference type="GO" id="GO:0005829">
    <property type="term" value="C:cytosol"/>
    <property type="evidence" value="ECO:0007669"/>
    <property type="project" value="TreeGrafter"/>
</dbReference>
<dbReference type="GO" id="GO:0004372">
    <property type="term" value="F:glycine hydroxymethyltransferase activity"/>
    <property type="evidence" value="ECO:0007669"/>
    <property type="project" value="UniProtKB-UniRule"/>
</dbReference>
<dbReference type="GO" id="GO:0030170">
    <property type="term" value="F:pyridoxal phosphate binding"/>
    <property type="evidence" value="ECO:0007669"/>
    <property type="project" value="UniProtKB-UniRule"/>
</dbReference>
<dbReference type="GO" id="GO:0019264">
    <property type="term" value="P:glycine biosynthetic process from serine"/>
    <property type="evidence" value="ECO:0007669"/>
    <property type="project" value="UniProtKB-UniRule"/>
</dbReference>
<dbReference type="GO" id="GO:0035999">
    <property type="term" value="P:tetrahydrofolate interconversion"/>
    <property type="evidence" value="ECO:0007669"/>
    <property type="project" value="UniProtKB-UniRule"/>
</dbReference>
<dbReference type="CDD" id="cd00378">
    <property type="entry name" value="SHMT"/>
    <property type="match status" value="1"/>
</dbReference>
<dbReference type="FunFam" id="3.40.640.10:FF:000001">
    <property type="entry name" value="Serine hydroxymethyltransferase"/>
    <property type="match status" value="1"/>
</dbReference>
<dbReference type="Gene3D" id="3.90.1150.10">
    <property type="entry name" value="Aspartate Aminotransferase, domain 1"/>
    <property type="match status" value="1"/>
</dbReference>
<dbReference type="Gene3D" id="3.40.640.10">
    <property type="entry name" value="Type I PLP-dependent aspartate aminotransferase-like (Major domain)"/>
    <property type="match status" value="1"/>
</dbReference>
<dbReference type="HAMAP" id="MF_00051">
    <property type="entry name" value="SHMT"/>
    <property type="match status" value="1"/>
</dbReference>
<dbReference type="InterPro" id="IPR015424">
    <property type="entry name" value="PyrdxlP-dep_Trfase"/>
</dbReference>
<dbReference type="InterPro" id="IPR015421">
    <property type="entry name" value="PyrdxlP-dep_Trfase_major"/>
</dbReference>
<dbReference type="InterPro" id="IPR015422">
    <property type="entry name" value="PyrdxlP-dep_Trfase_small"/>
</dbReference>
<dbReference type="InterPro" id="IPR001085">
    <property type="entry name" value="Ser_HO-MeTrfase"/>
</dbReference>
<dbReference type="InterPro" id="IPR049943">
    <property type="entry name" value="Ser_HO-MeTrfase-like"/>
</dbReference>
<dbReference type="InterPro" id="IPR019798">
    <property type="entry name" value="Ser_HO-MeTrfase_PLP_BS"/>
</dbReference>
<dbReference type="InterPro" id="IPR039429">
    <property type="entry name" value="SHMT-like_dom"/>
</dbReference>
<dbReference type="NCBIfam" id="NF000586">
    <property type="entry name" value="PRK00011.1"/>
    <property type="match status" value="1"/>
</dbReference>
<dbReference type="PANTHER" id="PTHR11680">
    <property type="entry name" value="SERINE HYDROXYMETHYLTRANSFERASE"/>
    <property type="match status" value="1"/>
</dbReference>
<dbReference type="PANTHER" id="PTHR11680:SF35">
    <property type="entry name" value="SERINE HYDROXYMETHYLTRANSFERASE 1"/>
    <property type="match status" value="1"/>
</dbReference>
<dbReference type="Pfam" id="PF00464">
    <property type="entry name" value="SHMT"/>
    <property type="match status" value="1"/>
</dbReference>
<dbReference type="PIRSF" id="PIRSF000412">
    <property type="entry name" value="SHMT"/>
    <property type="match status" value="1"/>
</dbReference>
<dbReference type="SUPFAM" id="SSF53383">
    <property type="entry name" value="PLP-dependent transferases"/>
    <property type="match status" value="1"/>
</dbReference>
<dbReference type="PROSITE" id="PS00096">
    <property type="entry name" value="SHMT"/>
    <property type="match status" value="1"/>
</dbReference>
<name>GLYA_LACJO</name>
<proteinExistence type="inferred from homology"/>
<sequence>MNYGEKSPALWDAIKSEEKRQEDTIELIASENIVSDAVREAQGSVLTNKYAEGYPGKRYYGGCQYIDKVEQLAIDYAKKLFNAEYANVQPHSGSQANMTVYNALLKPGDTILGMGMDAGGHLTHGSKVNFSGKIFNSISYDLNPETEELDFDRIRQLAIEKKPKLIIAGASAYSRIIDWQKFREIADEVGAYLMVDMAHIAGLVATGAHPSPVPIADVVTTTTHKTLRGPRGGMILSNNKELGKKIDSALFPGTQGGPLEHVIAAKAQAFYEDLQPEFTQYIDQVIKNSKAMAEEFKNSKNIRVVSGGTDNHLMIIDITKTGVTGKDAQNLLDSVNITTNKESIPGDKRSPFITSGLRIGTPAITSRGFKEPDAKEVAKIIIEVLDKPEDAGVLAEAKERVNDLVQKYPIK</sequence>
<protein>
    <recommendedName>
        <fullName evidence="1">Serine hydroxymethyltransferase</fullName>
        <shortName evidence="1">SHMT</shortName>
        <shortName evidence="1">Serine methylase</shortName>
        <ecNumber evidence="1">2.1.2.1</ecNumber>
    </recommendedName>
</protein>
<accession>Q74LC1</accession>
<evidence type="ECO:0000255" key="1">
    <source>
        <dbReference type="HAMAP-Rule" id="MF_00051"/>
    </source>
</evidence>
<keyword id="KW-0028">Amino-acid biosynthesis</keyword>
<keyword id="KW-0963">Cytoplasm</keyword>
<keyword id="KW-0554">One-carbon metabolism</keyword>
<keyword id="KW-0663">Pyridoxal phosphate</keyword>
<keyword id="KW-0808">Transferase</keyword>
<gene>
    <name evidence="1" type="primary">glyA</name>
    <name type="ordered locus">LJ_0263</name>
</gene>
<organism>
    <name type="scientific">Lactobacillus johnsonii (strain CNCM I-12250 / La1 / NCC 533)</name>
    <dbReference type="NCBI Taxonomy" id="257314"/>
    <lineage>
        <taxon>Bacteria</taxon>
        <taxon>Bacillati</taxon>
        <taxon>Bacillota</taxon>
        <taxon>Bacilli</taxon>
        <taxon>Lactobacillales</taxon>
        <taxon>Lactobacillaceae</taxon>
        <taxon>Lactobacillus</taxon>
    </lineage>
</organism>
<reference key="1">
    <citation type="journal article" date="2004" name="Proc. Natl. Acad. Sci. U.S.A.">
        <title>The genome sequence of the probiotic intestinal bacterium Lactobacillus johnsonii NCC 533.</title>
        <authorList>
            <person name="Pridmore R.D."/>
            <person name="Berger B."/>
            <person name="Desiere F."/>
            <person name="Vilanova D."/>
            <person name="Barretto C."/>
            <person name="Pittet A.-C."/>
            <person name="Zwahlen M.-C."/>
            <person name="Rouvet M."/>
            <person name="Altermann E."/>
            <person name="Barrangou R."/>
            <person name="Mollet B."/>
            <person name="Mercenier A."/>
            <person name="Klaenhammer T."/>
            <person name="Arigoni F."/>
            <person name="Schell M.A."/>
        </authorList>
    </citation>
    <scope>NUCLEOTIDE SEQUENCE [LARGE SCALE GENOMIC DNA]</scope>
    <source>
        <strain>CNCM I-1225 / La1 / NCC 533</strain>
    </source>
</reference>